<protein>
    <recommendedName>
        <fullName evidence="1">Adenylate kinase</fullName>
        <shortName evidence="1">AK</shortName>
        <ecNumber evidence="1">2.7.4.3</ecNumber>
    </recommendedName>
    <alternativeName>
        <fullName evidence="1">ATP-AMP transphosphorylase</fullName>
    </alternativeName>
    <alternativeName>
        <fullName evidence="1">ATP:AMP phosphotransferase</fullName>
    </alternativeName>
    <alternativeName>
        <fullName evidence="1">Adenylate monophosphate kinase</fullName>
    </alternativeName>
</protein>
<gene>
    <name evidence="1" type="primary">adk</name>
    <name type="ordered locus">BC_0152</name>
</gene>
<organism>
    <name type="scientific">Bacillus cereus (strain ATCC 14579 / DSM 31 / CCUG 7414 / JCM 2152 / NBRC 15305 / NCIMB 9373 / NCTC 2599 / NRRL B-3711)</name>
    <dbReference type="NCBI Taxonomy" id="226900"/>
    <lineage>
        <taxon>Bacteria</taxon>
        <taxon>Bacillati</taxon>
        <taxon>Bacillota</taxon>
        <taxon>Bacilli</taxon>
        <taxon>Bacillales</taxon>
        <taxon>Bacillaceae</taxon>
        <taxon>Bacillus</taxon>
        <taxon>Bacillus cereus group</taxon>
    </lineage>
</organism>
<accession>Q81J22</accession>
<dbReference type="EC" id="2.7.4.3" evidence="1"/>
<dbReference type="EMBL" id="AE016877">
    <property type="protein sequence ID" value="AAP07232.1"/>
    <property type="molecule type" value="Genomic_DNA"/>
</dbReference>
<dbReference type="RefSeq" id="NP_830031.1">
    <property type="nucleotide sequence ID" value="NC_004722.1"/>
</dbReference>
<dbReference type="RefSeq" id="WP_001048989.1">
    <property type="nucleotide sequence ID" value="NZ_CP138336.1"/>
</dbReference>
<dbReference type="SMR" id="Q81J22"/>
<dbReference type="STRING" id="226900.BC_0152"/>
<dbReference type="KEGG" id="bce:BC0152"/>
<dbReference type="PATRIC" id="fig|226900.8.peg.154"/>
<dbReference type="HOGENOM" id="CLU_032354_1_2_9"/>
<dbReference type="OrthoDB" id="9805030at2"/>
<dbReference type="UniPathway" id="UPA00588">
    <property type="reaction ID" value="UER00649"/>
</dbReference>
<dbReference type="Proteomes" id="UP000001417">
    <property type="component" value="Chromosome"/>
</dbReference>
<dbReference type="GO" id="GO:0005737">
    <property type="term" value="C:cytoplasm"/>
    <property type="evidence" value="ECO:0000318"/>
    <property type="project" value="GO_Central"/>
</dbReference>
<dbReference type="GO" id="GO:0005829">
    <property type="term" value="C:cytosol"/>
    <property type="evidence" value="ECO:0000318"/>
    <property type="project" value="GO_Central"/>
</dbReference>
<dbReference type="GO" id="GO:0004017">
    <property type="term" value="F:adenylate kinase activity"/>
    <property type="evidence" value="ECO:0000318"/>
    <property type="project" value="GO_Central"/>
</dbReference>
<dbReference type="GO" id="GO:0005524">
    <property type="term" value="F:ATP binding"/>
    <property type="evidence" value="ECO:0007669"/>
    <property type="project" value="UniProtKB-UniRule"/>
</dbReference>
<dbReference type="GO" id="GO:0004550">
    <property type="term" value="F:nucleoside diphosphate kinase activity"/>
    <property type="evidence" value="ECO:0000318"/>
    <property type="project" value="GO_Central"/>
</dbReference>
<dbReference type="GO" id="GO:0008270">
    <property type="term" value="F:zinc ion binding"/>
    <property type="evidence" value="ECO:0007669"/>
    <property type="project" value="UniProtKB-UniRule"/>
</dbReference>
<dbReference type="GO" id="GO:0044209">
    <property type="term" value="P:AMP salvage"/>
    <property type="evidence" value="ECO:0007669"/>
    <property type="project" value="UniProtKB-UniRule"/>
</dbReference>
<dbReference type="GO" id="GO:0009132">
    <property type="term" value="P:nucleoside diphosphate metabolic process"/>
    <property type="evidence" value="ECO:0000318"/>
    <property type="project" value="GO_Central"/>
</dbReference>
<dbReference type="GO" id="GO:0009123">
    <property type="term" value="P:nucleoside monophosphate metabolic process"/>
    <property type="evidence" value="ECO:0000318"/>
    <property type="project" value="GO_Central"/>
</dbReference>
<dbReference type="CDD" id="cd01428">
    <property type="entry name" value="ADK"/>
    <property type="match status" value="1"/>
</dbReference>
<dbReference type="FunFam" id="3.40.50.300:FF:000106">
    <property type="entry name" value="Adenylate kinase mitochondrial"/>
    <property type="match status" value="1"/>
</dbReference>
<dbReference type="Gene3D" id="3.40.50.300">
    <property type="entry name" value="P-loop containing nucleotide triphosphate hydrolases"/>
    <property type="match status" value="1"/>
</dbReference>
<dbReference type="HAMAP" id="MF_00235">
    <property type="entry name" value="Adenylate_kinase_Adk"/>
    <property type="match status" value="1"/>
</dbReference>
<dbReference type="InterPro" id="IPR006259">
    <property type="entry name" value="Adenyl_kin_sub"/>
</dbReference>
<dbReference type="InterPro" id="IPR000850">
    <property type="entry name" value="Adenylat/UMP-CMP_kin"/>
</dbReference>
<dbReference type="InterPro" id="IPR033690">
    <property type="entry name" value="Adenylat_kinase_CS"/>
</dbReference>
<dbReference type="InterPro" id="IPR007862">
    <property type="entry name" value="Adenylate_kinase_lid-dom"/>
</dbReference>
<dbReference type="InterPro" id="IPR027417">
    <property type="entry name" value="P-loop_NTPase"/>
</dbReference>
<dbReference type="NCBIfam" id="TIGR01351">
    <property type="entry name" value="adk"/>
    <property type="match status" value="1"/>
</dbReference>
<dbReference type="NCBIfam" id="NF001380">
    <property type="entry name" value="PRK00279.1-2"/>
    <property type="match status" value="1"/>
</dbReference>
<dbReference type="NCBIfam" id="NF001381">
    <property type="entry name" value="PRK00279.1-3"/>
    <property type="match status" value="1"/>
</dbReference>
<dbReference type="NCBIfam" id="NF011100">
    <property type="entry name" value="PRK14527.1"/>
    <property type="match status" value="1"/>
</dbReference>
<dbReference type="PANTHER" id="PTHR23359">
    <property type="entry name" value="NUCLEOTIDE KINASE"/>
    <property type="match status" value="1"/>
</dbReference>
<dbReference type="Pfam" id="PF00406">
    <property type="entry name" value="ADK"/>
    <property type="match status" value="1"/>
</dbReference>
<dbReference type="Pfam" id="PF05191">
    <property type="entry name" value="ADK_lid"/>
    <property type="match status" value="1"/>
</dbReference>
<dbReference type="PRINTS" id="PR00094">
    <property type="entry name" value="ADENYLTKNASE"/>
</dbReference>
<dbReference type="SUPFAM" id="SSF52540">
    <property type="entry name" value="P-loop containing nucleoside triphosphate hydrolases"/>
    <property type="match status" value="1"/>
</dbReference>
<dbReference type="PROSITE" id="PS00113">
    <property type="entry name" value="ADENYLATE_KINASE"/>
    <property type="match status" value="1"/>
</dbReference>
<comment type="function">
    <text evidence="1">Catalyzes the reversible transfer of the terminal phosphate group between ATP and AMP. Plays an important role in cellular energy homeostasis and in adenine nucleotide metabolism.</text>
</comment>
<comment type="catalytic activity">
    <reaction evidence="1">
        <text>AMP + ATP = 2 ADP</text>
        <dbReference type="Rhea" id="RHEA:12973"/>
        <dbReference type="ChEBI" id="CHEBI:30616"/>
        <dbReference type="ChEBI" id="CHEBI:456215"/>
        <dbReference type="ChEBI" id="CHEBI:456216"/>
        <dbReference type="EC" id="2.7.4.3"/>
    </reaction>
</comment>
<comment type="pathway">
    <text evidence="1">Purine metabolism; AMP biosynthesis via salvage pathway; AMP from ADP: step 1/1.</text>
</comment>
<comment type="subunit">
    <text evidence="1">Monomer.</text>
</comment>
<comment type="subcellular location">
    <subcellularLocation>
        <location evidence="1">Cytoplasm</location>
    </subcellularLocation>
</comment>
<comment type="domain">
    <text evidence="1">Consists of three domains, a large central CORE domain and two small peripheral domains, NMPbind and LID, which undergo movements during catalysis. The LID domain closes over the site of phosphoryl transfer upon ATP binding. Assembling and dissambling the active center during each catalytic cycle provides an effective means to prevent ATP hydrolysis. Some bacteria have evolved a zinc-coordinating structure that stabilizes the LID domain.</text>
</comment>
<comment type="similarity">
    <text evidence="1">Belongs to the adenylate kinase family.</text>
</comment>
<feature type="chain" id="PRO_0000158721" description="Adenylate kinase">
    <location>
        <begin position="1"/>
        <end position="216"/>
    </location>
</feature>
<feature type="region of interest" description="NMP" evidence="1">
    <location>
        <begin position="30"/>
        <end position="59"/>
    </location>
</feature>
<feature type="region of interest" description="LID" evidence="1">
    <location>
        <begin position="126"/>
        <end position="163"/>
    </location>
</feature>
<feature type="binding site" evidence="1">
    <location>
        <begin position="10"/>
        <end position="15"/>
    </location>
    <ligand>
        <name>ATP</name>
        <dbReference type="ChEBI" id="CHEBI:30616"/>
    </ligand>
</feature>
<feature type="binding site" evidence="1">
    <location>
        <position position="31"/>
    </location>
    <ligand>
        <name>AMP</name>
        <dbReference type="ChEBI" id="CHEBI:456215"/>
    </ligand>
</feature>
<feature type="binding site" evidence="1">
    <location>
        <position position="36"/>
    </location>
    <ligand>
        <name>AMP</name>
        <dbReference type="ChEBI" id="CHEBI:456215"/>
    </ligand>
</feature>
<feature type="binding site" evidence="1">
    <location>
        <begin position="57"/>
        <end position="59"/>
    </location>
    <ligand>
        <name>AMP</name>
        <dbReference type="ChEBI" id="CHEBI:456215"/>
    </ligand>
</feature>
<feature type="binding site" evidence="1">
    <location>
        <begin position="85"/>
        <end position="88"/>
    </location>
    <ligand>
        <name>AMP</name>
        <dbReference type="ChEBI" id="CHEBI:456215"/>
    </ligand>
</feature>
<feature type="binding site" evidence="1">
    <location>
        <position position="92"/>
    </location>
    <ligand>
        <name>AMP</name>
        <dbReference type="ChEBI" id="CHEBI:456215"/>
    </ligand>
</feature>
<feature type="binding site" evidence="1">
    <location>
        <position position="127"/>
    </location>
    <ligand>
        <name>ATP</name>
        <dbReference type="ChEBI" id="CHEBI:30616"/>
    </ligand>
</feature>
<feature type="binding site" evidence="1">
    <location>
        <position position="130"/>
    </location>
    <ligand>
        <name>Zn(2+)</name>
        <dbReference type="ChEBI" id="CHEBI:29105"/>
        <note>structural</note>
    </ligand>
</feature>
<feature type="binding site" evidence="1">
    <location>
        <position position="133"/>
    </location>
    <ligand>
        <name>Zn(2+)</name>
        <dbReference type="ChEBI" id="CHEBI:29105"/>
        <note>structural</note>
    </ligand>
</feature>
<feature type="binding site" evidence="1">
    <location>
        <begin position="136"/>
        <end position="137"/>
    </location>
    <ligand>
        <name>ATP</name>
        <dbReference type="ChEBI" id="CHEBI:30616"/>
    </ligand>
</feature>
<feature type="binding site" evidence="1">
    <location>
        <position position="150"/>
    </location>
    <ligand>
        <name>Zn(2+)</name>
        <dbReference type="ChEBI" id="CHEBI:29105"/>
        <note>structural</note>
    </ligand>
</feature>
<feature type="binding site" evidence="1">
    <location>
        <position position="153"/>
    </location>
    <ligand>
        <name>Zn(2+)</name>
        <dbReference type="ChEBI" id="CHEBI:29105"/>
        <note>structural</note>
    </ligand>
</feature>
<feature type="binding site" evidence="1">
    <location>
        <position position="160"/>
    </location>
    <ligand>
        <name>AMP</name>
        <dbReference type="ChEBI" id="CHEBI:456215"/>
    </ligand>
</feature>
<feature type="binding site" evidence="1">
    <location>
        <position position="171"/>
    </location>
    <ligand>
        <name>AMP</name>
        <dbReference type="ChEBI" id="CHEBI:456215"/>
    </ligand>
</feature>
<feature type="binding site" evidence="1">
    <location>
        <position position="199"/>
    </location>
    <ligand>
        <name>ATP</name>
        <dbReference type="ChEBI" id="CHEBI:30616"/>
    </ligand>
</feature>
<name>KAD_BACCR</name>
<sequence length="216" mass="23755">MNLILMGLPGAGKGTQAEQIVAKYNIPHISTGDMFRAAMKAETEMGLQAKSFIDKGALVPDEVTIGIVRERLSQDDCVRGFLLDGFPRTVAQASALEEIMKDLGKKIDYVLNINVDSGLLLKRLTGRRICKECGATYHLEFNPPAKADVCDKCGGELYQRSDDNEETVANRLDVNIKQTKPLLDFYEELGYLQSINGEQDINKVFADIDVLIGGLA</sequence>
<reference key="1">
    <citation type="journal article" date="2003" name="Nature">
        <title>Genome sequence of Bacillus cereus and comparative analysis with Bacillus anthracis.</title>
        <authorList>
            <person name="Ivanova N."/>
            <person name="Sorokin A."/>
            <person name="Anderson I."/>
            <person name="Galleron N."/>
            <person name="Candelon B."/>
            <person name="Kapatral V."/>
            <person name="Bhattacharyya A."/>
            <person name="Reznik G."/>
            <person name="Mikhailova N."/>
            <person name="Lapidus A."/>
            <person name="Chu L."/>
            <person name="Mazur M."/>
            <person name="Goltsman E."/>
            <person name="Larsen N."/>
            <person name="D'Souza M."/>
            <person name="Walunas T."/>
            <person name="Grechkin Y."/>
            <person name="Pusch G."/>
            <person name="Haselkorn R."/>
            <person name="Fonstein M."/>
            <person name="Ehrlich S.D."/>
            <person name="Overbeek R."/>
            <person name="Kyrpides N.C."/>
        </authorList>
    </citation>
    <scope>NUCLEOTIDE SEQUENCE [LARGE SCALE GENOMIC DNA]</scope>
    <source>
        <strain>ATCC 14579 / DSM 31 / CCUG 7414 / JCM 2152 / NBRC 15305 / NCIMB 9373 / NCTC 2599 / NRRL B-3711</strain>
    </source>
</reference>
<proteinExistence type="inferred from homology"/>
<keyword id="KW-0067">ATP-binding</keyword>
<keyword id="KW-0963">Cytoplasm</keyword>
<keyword id="KW-0418">Kinase</keyword>
<keyword id="KW-0479">Metal-binding</keyword>
<keyword id="KW-0545">Nucleotide biosynthesis</keyword>
<keyword id="KW-0547">Nucleotide-binding</keyword>
<keyword id="KW-1185">Reference proteome</keyword>
<keyword id="KW-0808">Transferase</keyword>
<keyword id="KW-0862">Zinc</keyword>
<evidence type="ECO:0000255" key="1">
    <source>
        <dbReference type="HAMAP-Rule" id="MF_00235"/>
    </source>
</evidence>